<feature type="chain" id="PRO_0000355398" description="Cytochrome b6-f complex subunit 5">
    <location>
        <begin position="1"/>
        <end position="37"/>
    </location>
</feature>
<feature type="transmembrane region" description="Helical" evidence="1">
    <location>
        <begin position="5"/>
        <end position="25"/>
    </location>
</feature>
<reference key="1">
    <citation type="journal article" date="2008" name="Theor. Appl. Genet.">
        <title>The complete nucleotide sequence of the cassava (Manihot esculenta) chloroplast genome and the evolution of atpF in Malpighiales: RNA editing and multiple losses of a group II intron.</title>
        <authorList>
            <person name="Daniell H."/>
            <person name="Wurdack K.J."/>
            <person name="Kanagaraj A."/>
            <person name="Lee S.-B."/>
            <person name="Saski C."/>
            <person name="Jansen R.K."/>
        </authorList>
    </citation>
    <scope>NUCLEOTIDE SEQUENCE [LARGE SCALE GENOMIC DNA]</scope>
    <source>
        <strain>cv. TME3</strain>
    </source>
</reference>
<dbReference type="EMBL" id="EU117376">
    <property type="protein sequence ID" value="ABV66173.1"/>
    <property type="molecule type" value="Genomic_DNA"/>
</dbReference>
<dbReference type="RefSeq" id="YP_001718456.1">
    <property type="nucleotide sequence ID" value="NC_010433.1"/>
</dbReference>
<dbReference type="SMR" id="B1NWG9"/>
<dbReference type="EnsemblPlants" id="Manes.09G082802.1.v8.1">
    <property type="protein sequence ID" value="Manes.09G082802.1.v8.1.CDS.1"/>
    <property type="gene ID" value="Manes.09G082802.v8.1"/>
</dbReference>
<dbReference type="GeneID" id="6000019"/>
<dbReference type="Gramene" id="Manes.09G082802.1.v8.1">
    <property type="protein sequence ID" value="Manes.09G082802.1.v8.1.CDS.1"/>
    <property type="gene ID" value="Manes.09G082802.v8.1"/>
</dbReference>
<dbReference type="KEGG" id="mesc:6000019"/>
<dbReference type="OrthoDB" id="35473at2759"/>
<dbReference type="GO" id="GO:0009535">
    <property type="term" value="C:chloroplast thylakoid membrane"/>
    <property type="evidence" value="ECO:0007669"/>
    <property type="project" value="UniProtKB-SubCell"/>
</dbReference>
<dbReference type="GO" id="GO:0009512">
    <property type="term" value="C:cytochrome b6f complex"/>
    <property type="evidence" value="ECO:0007669"/>
    <property type="project" value="InterPro"/>
</dbReference>
<dbReference type="GO" id="GO:0045158">
    <property type="term" value="F:electron transporter, transferring electrons within cytochrome b6/f complex of photosystem II activity"/>
    <property type="evidence" value="ECO:0007669"/>
    <property type="project" value="UniProtKB-UniRule"/>
</dbReference>
<dbReference type="GO" id="GO:0017004">
    <property type="term" value="P:cytochrome complex assembly"/>
    <property type="evidence" value="ECO:0007669"/>
    <property type="project" value="UniProtKB-UniRule"/>
</dbReference>
<dbReference type="GO" id="GO:0015979">
    <property type="term" value="P:photosynthesis"/>
    <property type="evidence" value="ECO:0007669"/>
    <property type="project" value="UniProtKB-KW"/>
</dbReference>
<dbReference type="HAMAP" id="MF_00432">
    <property type="entry name" value="Cytb6_f_PetG"/>
    <property type="match status" value="1"/>
</dbReference>
<dbReference type="InterPro" id="IPR003683">
    <property type="entry name" value="Cyt_6/f_cplx_su5"/>
</dbReference>
<dbReference type="InterPro" id="IPR036099">
    <property type="entry name" value="Cyt_6/f_cplx_su5_sf"/>
</dbReference>
<dbReference type="NCBIfam" id="NF001907">
    <property type="entry name" value="PRK00665.1"/>
    <property type="match status" value="1"/>
</dbReference>
<dbReference type="Pfam" id="PF02529">
    <property type="entry name" value="PetG"/>
    <property type="match status" value="1"/>
</dbReference>
<dbReference type="PIRSF" id="PIRSF000034">
    <property type="entry name" value="Cyt_b6-f_V"/>
    <property type="match status" value="1"/>
</dbReference>
<dbReference type="SUPFAM" id="SSF103446">
    <property type="entry name" value="PetG subunit of the cytochrome b6f complex"/>
    <property type="match status" value="1"/>
</dbReference>
<proteinExistence type="inferred from homology"/>
<name>PETG_MANES</name>
<geneLocation type="chloroplast"/>
<gene>
    <name evidence="1" type="primary">petG</name>
</gene>
<organism>
    <name type="scientific">Manihot esculenta</name>
    <name type="common">Cassava</name>
    <name type="synonym">Jatropha manihot</name>
    <dbReference type="NCBI Taxonomy" id="3983"/>
    <lineage>
        <taxon>Eukaryota</taxon>
        <taxon>Viridiplantae</taxon>
        <taxon>Streptophyta</taxon>
        <taxon>Embryophyta</taxon>
        <taxon>Tracheophyta</taxon>
        <taxon>Spermatophyta</taxon>
        <taxon>Magnoliopsida</taxon>
        <taxon>eudicotyledons</taxon>
        <taxon>Gunneridae</taxon>
        <taxon>Pentapetalae</taxon>
        <taxon>rosids</taxon>
        <taxon>fabids</taxon>
        <taxon>Malpighiales</taxon>
        <taxon>Euphorbiaceae</taxon>
        <taxon>Crotonoideae</taxon>
        <taxon>Manihoteae</taxon>
        <taxon>Manihot</taxon>
    </lineage>
</organism>
<keyword id="KW-0150">Chloroplast</keyword>
<keyword id="KW-0249">Electron transport</keyword>
<keyword id="KW-0472">Membrane</keyword>
<keyword id="KW-0602">Photosynthesis</keyword>
<keyword id="KW-0934">Plastid</keyword>
<keyword id="KW-0793">Thylakoid</keyword>
<keyword id="KW-0812">Transmembrane</keyword>
<keyword id="KW-1133">Transmembrane helix</keyword>
<keyword id="KW-0813">Transport</keyword>
<sequence>MIEVFLFGIVLGLIPITLAGLFVTAYLQYRRGDQLDL</sequence>
<accession>B1NWG9</accession>
<protein>
    <recommendedName>
        <fullName evidence="1">Cytochrome b6-f complex subunit 5</fullName>
    </recommendedName>
    <alternativeName>
        <fullName evidence="1">Cytochrome b6-f complex subunit PetG</fullName>
    </alternativeName>
    <alternativeName>
        <fullName evidence="1">Cytochrome b6-f complex subunit V</fullName>
    </alternativeName>
</protein>
<comment type="function">
    <text evidence="1">Component of the cytochrome b6-f complex, which mediates electron transfer between photosystem II (PSII) and photosystem I (PSI), cyclic electron flow around PSI, and state transitions. PetG is required for either the stability or assembly of the cytochrome b6-f complex.</text>
</comment>
<comment type="subunit">
    <text evidence="1">The 4 large subunits of the cytochrome b6-f complex are cytochrome b6, subunit IV (17 kDa polypeptide, PetD), cytochrome f and the Rieske protein, while the 4 small subunits are PetG, PetL, PetM and PetN. The complex functions as a dimer.</text>
</comment>
<comment type="subcellular location">
    <subcellularLocation>
        <location evidence="1">Plastid</location>
        <location evidence="1">Chloroplast thylakoid membrane</location>
        <topology evidence="1">Single-pass membrane protein</topology>
    </subcellularLocation>
</comment>
<comment type="similarity">
    <text evidence="1">Belongs to the PetG family.</text>
</comment>
<evidence type="ECO:0000255" key="1">
    <source>
        <dbReference type="HAMAP-Rule" id="MF_00432"/>
    </source>
</evidence>